<reference key="1">
    <citation type="submission" date="2000-02" db="EMBL/GenBank/DDBJ databases">
        <title>The phospholipase B gene from a serotype D isolate of Cryptococcus neoformans.</title>
        <authorList>
            <person name="Varma A."/>
            <person name="Kwon-Chung K.J."/>
        </authorList>
    </citation>
    <scope>NUCLEOTIDE SEQUENCE [GENOMIC DNA]</scope>
    <source>
        <strain>B-3501</strain>
    </source>
</reference>
<reference key="2">
    <citation type="journal article" date="2005" name="Science">
        <title>The genome of the basidiomycetous yeast and human pathogen Cryptococcus neoformans.</title>
        <authorList>
            <person name="Loftus B.J."/>
            <person name="Fung E."/>
            <person name="Roncaglia P."/>
            <person name="Rowley D."/>
            <person name="Amedeo P."/>
            <person name="Bruno D."/>
            <person name="Vamathevan J."/>
            <person name="Miranda M."/>
            <person name="Anderson I.J."/>
            <person name="Fraser J.A."/>
            <person name="Allen J.E."/>
            <person name="Bosdet I.E."/>
            <person name="Brent M.R."/>
            <person name="Chiu R."/>
            <person name="Doering T.L."/>
            <person name="Donlin M.J."/>
            <person name="D'Souza C.A."/>
            <person name="Fox D.S."/>
            <person name="Grinberg V."/>
            <person name="Fu J."/>
            <person name="Fukushima M."/>
            <person name="Haas B.J."/>
            <person name="Huang J.C."/>
            <person name="Janbon G."/>
            <person name="Jones S.J.M."/>
            <person name="Koo H.L."/>
            <person name="Krzywinski M.I."/>
            <person name="Kwon-Chung K.J."/>
            <person name="Lengeler K.B."/>
            <person name="Maiti R."/>
            <person name="Marra M.A."/>
            <person name="Marra R.E."/>
            <person name="Mathewson C.A."/>
            <person name="Mitchell T.G."/>
            <person name="Pertea M."/>
            <person name="Riggs F.R."/>
            <person name="Salzberg S.L."/>
            <person name="Schein J.E."/>
            <person name="Shvartsbeyn A."/>
            <person name="Shin H."/>
            <person name="Shumway M."/>
            <person name="Specht C.A."/>
            <person name="Suh B.B."/>
            <person name="Tenney A."/>
            <person name="Utterback T.R."/>
            <person name="Wickes B.L."/>
            <person name="Wortman J.R."/>
            <person name="Wye N.H."/>
            <person name="Kronstad J.W."/>
            <person name="Lodge J.K."/>
            <person name="Heitman J."/>
            <person name="Davis R.W."/>
            <person name="Fraser C.M."/>
            <person name="Hyman R.W."/>
        </authorList>
    </citation>
    <scope>NUCLEOTIDE SEQUENCE [LARGE SCALE GENOMIC DNA]</scope>
    <source>
        <strain>B-3501A</strain>
    </source>
</reference>
<evidence type="ECO:0000250" key="1"/>
<evidence type="ECO:0000255" key="2"/>
<evidence type="ECO:0000255" key="3">
    <source>
        <dbReference type="PROSITE-ProRule" id="PRU00555"/>
    </source>
</evidence>
<evidence type="ECO:0000305" key="4"/>
<feature type="signal peptide" evidence="2">
    <location>
        <begin position="1"/>
        <end position="19"/>
    </location>
</feature>
<feature type="chain" id="PRO_0000410196" description="Phospholipase B">
    <location>
        <begin position="20"/>
        <end position="637"/>
    </location>
</feature>
<feature type="domain" description="PLA2c" evidence="3">
    <location>
        <begin position="46"/>
        <end position="572"/>
    </location>
</feature>
<feature type="glycosylation site" description="N-linked (GlcNAc...) asparagine" evidence="2">
    <location>
        <position position="50"/>
    </location>
</feature>
<feature type="glycosylation site" description="N-linked (GlcNAc...) asparagine" evidence="2">
    <location>
        <position position="56"/>
    </location>
</feature>
<feature type="glycosylation site" description="N-linked (GlcNAc...) asparagine" evidence="2">
    <location>
        <position position="122"/>
    </location>
</feature>
<feature type="glycosylation site" description="N-linked (GlcNAc...) asparagine" evidence="2">
    <location>
        <position position="231"/>
    </location>
</feature>
<feature type="glycosylation site" description="N-linked (GlcNAc...) asparagine" evidence="2">
    <location>
        <position position="246"/>
    </location>
</feature>
<feature type="glycosylation site" description="N-linked (GlcNAc...) asparagine" evidence="2">
    <location>
        <position position="272"/>
    </location>
</feature>
<feature type="glycosylation site" description="N-linked (GlcNAc...) asparagine" evidence="2">
    <location>
        <position position="314"/>
    </location>
</feature>
<feature type="glycosylation site" description="N-linked (GlcNAc...) asparagine" evidence="2">
    <location>
        <position position="343"/>
    </location>
</feature>
<feature type="glycosylation site" description="N-linked (GlcNAc...) asparagine" evidence="2">
    <location>
        <position position="387"/>
    </location>
</feature>
<feature type="glycosylation site" description="N-linked (GlcNAc...) asparagine" evidence="2">
    <location>
        <position position="433"/>
    </location>
</feature>
<feature type="glycosylation site" description="N-linked (GlcNAc...) asparagine" evidence="2">
    <location>
        <position position="481"/>
    </location>
</feature>
<feature type="glycosylation site" description="N-linked (GlcNAc...) asparagine" evidence="2">
    <location>
        <position position="501"/>
    </location>
</feature>
<feature type="glycosylation site" description="N-linked (GlcNAc...) asparagine" evidence="2">
    <location>
        <position position="528"/>
    </location>
</feature>
<feature type="glycosylation site" description="N-linked (GlcNAc...) asparagine" evidence="2">
    <location>
        <position position="553"/>
    </location>
</feature>
<feature type="glycosylation site" description="N-linked (GlcNAc...) asparagine" evidence="2">
    <location>
        <position position="572"/>
    </location>
</feature>
<feature type="glycosylation site" description="N-linked (GlcNAc...) asparagine" evidence="2">
    <location>
        <position position="594"/>
    </location>
</feature>
<feature type="glycosylation site" description="N-linked (GlcNAc...) asparagine" evidence="2">
    <location>
        <position position="606"/>
    </location>
</feature>
<name>PLB1_CRYNB</name>
<comment type="function">
    <text evidence="1">Exhibits phospholipase B (PLB), lysophospholipase (LPL) and lysophospholipase/transacylase (LPTA) activities.</text>
</comment>
<comment type="catalytic activity">
    <reaction>
        <text>a 1-acyl-sn-glycero-3-phosphocholine + H2O = sn-glycerol 3-phosphocholine + a fatty acid + H(+)</text>
        <dbReference type="Rhea" id="RHEA:15177"/>
        <dbReference type="ChEBI" id="CHEBI:15377"/>
        <dbReference type="ChEBI" id="CHEBI:15378"/>
        <dbReference type="ChEBI" id="CHEBI:16870"/>
        <dbReference type="ChEBI" id="CHEBI:28868"/>
        <dbReference type="ChEBI" id="CHEBI:58168"/>
        <dbReference type="EC" id="3.1.1.5"/>
    </reaction>
</comment>
<comment type="subcellular location">
    <subcellularLocation>
        <location evidence="1">Secreted</location>
    </subcellularLocation>
</comment>
<comment type="PTM">
    <text>N-glycosylated.</text>
</comment>
<comment type="similarity">
    <text evidence="4">Belongs to the lysophospholipase family.</text>
</comment>
<comment type="sequence caution" evidence="4">
    <conflict type="erroneous gene model prediction">
        <sequence resource="EMBL-CDS" id="AAF61964"/>
    </conflict>
</comment>
<accession>P0CP75</accession>
<accession>Q55ID9</accession>
<accession>Q5K7X8</accession>
<accession>Q9P8L1</accession>
<gene>
    <name type="primary">PLB1</name>
    <name type="synonym">PLB</name>
    <name type="ordered locus">CNBM0810</name>
</gene>
<sequence length="637" mass="68594">MSIITTAFALSLLATTAFAVPPETPRIELQAERGLGDQSYAPWQVDCPSNVTWIRNATTGLGTGERAYIEAREKLVQPAIEQMMAARGLETPPRTPVIGVALAGGGYRAMLTGLGGIMGMMNESTEASQSETGGWLDGVSYWSGLSGGSWATGSFMSNGGQLPTTLLENLWNIDSNLVFPDDGKLSFYTNLYTETNAKSDLGFPVQITDIWGLAIGSHVLPEPYQLSNTPNLTFSSLPSVVAALGNASLPMPIIVAADRKRREAGELVIAENATVWEFTPYEFGSWAFGSQYKSPGAFTPIEYLGTSVDDGSPNGTCWKGFDQLSFVMGTSATLFNGAFLELNGTDSGLLTNLITAFLADLGEDQADISRIPNSFSNYNSGENPIYNLTYITLVDAGETNQNIPLEPLLVPTRDVDAIVAFDSSYDSDYIWPNGTALRTTYERAKILAEHENTRVLMPEVPSMNGFVNGGYNSRPTFFGCNDTTTPVIIYIPSYPWSFAANTSTYQLSYENNEANEMLLNGMRSLTLNHSVPTWPTCFACALTDRSFMYTSENRSTTCQECFDTWCWAGDDNTTEPANYEPVINSVPPWLIANNLSIGMADAPGSNESTAGTASSGAAKMGVGMGMVALTAGLGLML</sequence>
<protein>
    <recommendedName>
        <fullName>Phospholipase B</fullName>
        <ecNumber>3.1.1.5</ecNumber>
    </recommendedName>
    <alternativeName>
        <fullName>Lysophospholipase</fullName>
    </alternativeName>
</protein>
<keyword id="KW-0325">Glycoprotein</keyword>
<keyword id="KW-0378">Hydrolase</keyword>
<keyword id="KW-0442">Lipid degradation</keyword>
<keyword id="KW-0443">Lipid metabolism</keyword>
<keyword id="KW-0964">Secreted</keyword>
<keyword id="KW-0732">Signal</keyword>
<proteinExistence type="inferred from homology"/>
<organism>
    <name type="scientific">Cryptococcus neoformans var. neoformans serotype D (strain B-3501A)</name>
    <name type="common">Filobasidiella neoformans</name>
    <dbReference type="NCBI Taxonomy" id="283643"/>
    <lineage>
        <taxon>Eukaryota</taxon>
        <taxon>Fungi</taxon>
        <taxon>Dikarya</taxon>
        <taxon>Basidiomycota</taxon>
        <taxon>Agaricomycotina</taxon>
        <taxon>Tremellomycetes</taxon>
        <taxon>Tremellales</taxon>
        <taxon>Cryptococcaceae</taxon>
        <taxon>Cryptococcus</taxon>
        <taxon>Cryptococcus neoformans species complex</taxon>
    </lineage>
</organism>
<dbReference type="EC" id="3.1.1.5"/>
<dbReference type="EMBL" id="AF238241">
    <property type="protein sequence ID" value="AAF61964.1"/>
    <property type="status" value="ALT_SEQ"/>
    <property type="molecule type" value="Genomic_DNA"/>
</dbReference>
<dbReference type="EMBL" id="AAEY01000062">
    <property type="protein sequence ID" value="EAL17514.1"/>
    <property type="molecule type" value="Genomic_DNA"/>
</dbReference>
<dbReference type="RefSeq" id="XP_772161.1">
    <property type="nucleotide sequence ID" value="XM_767068.1"/>
</dbReference>
<dbReference type="SMR" id="P0CP75"/>
<dbReference type="BindingDB" id="P0CP75"/>
<dbReference type="ChEMBL" id="CHEMBL4157"/>
<dbReference type="GlyCosmos" id="P0CP75">
    <property type="glycosylation" value="17 sites, No reported glycans"/>
</dbReference>
<dbReference type="GeneID" id="4939441"/>
<dbReference type="KEGG" id="cnb:CNBM0810"/>
<dbReference type="VEuPathDB" id="FungiDB:CNBM0810"/>
<dbReference type="HOGENOM" id="CLU_014602_0_0_1"/>
<dbReference type="OrthoDB" id="1818at5206"/>
<dbReference type="GO" id="GO:0005829">
    <property type="term" value="C:cytosol"/>
    <property type="evidence" value="ECO:0007669"/>
    <property type="project" value="TreeGrafter"/>
</dbReference>
<dbReference type="GO" id="GO:0005576">
    <property type="term" value="C:extracellular region"/>
    <property type="evidence" value="ECO:0007669"/>
    <property type="project" value="UniProtKB-SubCell"/>
</dbReference>
<dbReference type="GO" id="GO:0004622">
    <property type="term" value="F:lysophospholipase activity"/>
    <property type="evidence" value="ECO:0007669"/>
    <property type="project" value="UniProtKB-EC"/>
</dbReference>
<dbReference type="GO" id="GO:0004623">
    <property type="term" value="F:phospholipase A2 activity"/>
    <property type="evidence" value="ECO:0007669"/>
    <property type="project" value="TreeGrafter"/>
</dbReference>
<dbReference type="GO" id="GO:0046475">
    <property type="term" value="P:glycerophospholipid catabolic process"/>
    <property type="evidence" value="ECO:0007669"/>
    <property type="project" value="TreeGrafter"/>
</dbReference>
<dbReference type="Gene3D" id="3.40.1090.10">
    <property type="entry name" value="Cytosolic phospholipase A2 catalytic domain"/>
    <property type="match status" value="1"/>
</dbReference>
<dbReference type="InterPro" id="IPR016035">
    <property type="entry name" value="Acyl_Trfase/lysoPLipase"/>
</dbReference>
<dbReference type="InterPro" id="IPR002642">
    <property type="entry name" value="LysoPLipase_cat_dom"/>
</dbReference>
<dbReference type="PANTHER" id="PTHR10728">
    <property type="entry name" value="CYTOSOLIC PHOSPHOLIPASE A2"/>
    <property type="match status" value="1"/>
</dbReference>
<dbReference type="PANTHER" id="PTHR10728:SF33">
    <property type="entry name" value="LYSOPHOSPHOLIPASE 1-RELATED"/>
    <property type="match status" value="1"/>
</dbReference>
<dbReference type="Pfam" id="PF01735">
    <property type="entry name" value="PLA2_B"/>
    <property type="match status" value="1"/>
</dbReference>
<dbReference type="SMART" id="SM00022">
    <property type="entry name" value="PLAc"/>
    <property type="match status" value="1"/>
</dbReference>
<dbReference type="SUPFAM" id="SSF52151">
    <property type="entry name" value="FabD/lysophospholipase-like"/>
    <property type="match status" value="1"/>
</dbReference>
<dbReference type="PROSITE" id="PS51210">
    <property type="entry name" value="PLA2C"/>
    <property type="match status" value="1"/>
</dbReference>